<keyword id="KW-0472">Membrane</keyword>
<keyword id="KW-1185">Reference proteome</keyword>
<keyword id="KW-0812">Transmembrane</keyword>
<keyword id="KW-1133">Transmembrane helix</keyword>
<organism>
    <name type="scientific">Caenorhabditis elegans</name>
    <dbReference type="NCBI Taxonomy" id="6239"/>
    <lineage>
        <taxon>Eukaryota</taxon>
        <taxon>Metazoa</taxon>
        <taxon>Ecdysozoa</taxon>
        <taxon>Nematoda</taxon>
        <taxon>Chromadorea</taxon>
        <taxon>Rhabditida</taxon>
        <taxon>Rhabditina</taxon>
        <taxon>Rhabditomorpha</taxon>
        <taxon>Rhabditoidea</taxon>
        <taxon>Rhabditidae</taxon>
        <taxon>Peloderinae</taxon>
        <taxon>Caenorhabditis</taxon>
    </lineage>
</organism>
<protein>
    <recommendedName>
        <fullName>Uncharacterized protein ZK1321.1</fullName>
    </recommendedName>
</protein>
<gene>
    <name type="ORF">ZK1321.1</name>
</gene>
<dbReference type="EMBL" id="Z48584">
    <property type="protein sequence ID" value="CAA88475.2"/>
    <property type="molecule type" value="Genomic_DNA"/>
</dbReference>
<dbReference type="PIR" id="T27757">
    <property type="entry name" value="T27757"/>
</dbReference>
<dbReference type="RefSeq" id="NP_496103.2">
    <property type="nucleotide sequence ID" value="NM_063702.4"/>
</dbReference>
<dbReference type="FunCoup" id="Q09368">
    <property type="interactions" value="310"/>
</dbReference>
<dbReference type="PaxDb" id="6239-ZK1321.1"/>
<dbReference type="EnsemblMetazoa" id="ZK1321.1.1">
    <property type="protein sequence ID" value="ZK1321.1.1"/>
    <property type="gene ID" value="WBGene00014260"/>
</dbReference>
<dbReference type="GeneID" id="191567"/>
<dbReference type="KEGG" id="cel:CELE_ZK1321.1"/>
<dbReference type="UCSC" id="ZK1321.1">
    <property type="organism name" value="c. elegans"/>
</dbReference>
<dbReference type="AGR" id="WB:WBGene00014260"/>
<dbReference type="CTD" id="191567"/>
<dbReference type="WormBase" id="ZK1321.1">
    <property type="protein sequence ID" value="CE45473"/>
    <property type="gene ID" value="WBGene00014260"/>
</dbReference>
<dbReference type="eggNOG" id="ENOG502TIM1">
    <property type="taxonomic scope" value="Eukaryota"/>
</dbReference>
<dbReference type="HOGENOM" id="CLU_1636946_0_0_1"/>
<dbReference type="InParanoid" id="Q09368"/>
<dbReference type="OMA" id="FRIPESC"/>
<dbReference type="OrthoDB" id="5867623at2759"/>
<dbReference type="PRO" id="PR:Q09368"/>
<dbReference type="Proteomes" id="UP000001940">
    <property type="component" value="Chromosome II"/>
</dbReference>
<dbReference type="Bgee" id="WBGene00014260">
    <property type="expression patterns" value="Expressed in pharyngeal muscle cell (C elegans) and 1 other cell type or tissue"/>
</dbReference>
<dbReference type="GO" id="GO:0016020">
    <property type="term" value="C:membrane"/>
    <property type="evidence" value="ECO:0007669"/>
    <property type="project" value="UniProtKB-SubCell"/>
</dbReference>
<accession>Q09368</accession>
<comment type="subcellular location">
    <subcellularLocation>
        <location evidence="2">Membrane</location>
        <topology evidence="2">Single-pass membrane protein</topology>
    </subcellularLocation>
</comment>
<name>YS31_CAEEL</name>
<sequence>MQFSLSYLISIFYIILITSETTAFSPKRPNLYIWLAQNSYICDPTLLNKRTHRFLTPWESVRLRCSCGDPLATKSACGRKHGNSNQKLACFRLPDPCLREYAVIFEHGGNRLSVPLPPSKPHRIVTAVRKTVTTKHSQRTPKIVSTIPVGAVLRVKKVKEKL</sequence>
<proteinExistence type="predicted"/>
<evidence type="ECO:0000255" key="1"/>
<evidence type="ECO:0000305" key="2"/>
<feature type="chain" id="PRO_0000065576" description="Uncharacterized protein ZK1321.1">
    <location>
        <begin position="1"/>
        <end position="162"/>
    </location>
</feature>
<feature type="transmembrane region" description="Helical" evidence="1">
    <location>
        <begin position="6"/>
        <end position="24"/>
    </location>
</feature>
<reference key="1">
    <citation type="journal article" date="1998" name="Science">
        <title>Genome sequence of the nematode C. elegans: a platform for investigating biology.</title>
        <authorList>
            <consortium name="The C. elegans sequencing consortium"/>
        </authorList>
    </citation>
    <scope>NUCLEOTIDE SEQUENCE [LARGE SCALE GENOMIC DNA]</scope>
    <source>
        <strain>Bristol N2</strain>
    </source>
</reference>